<evidence type="ECO:0000255" key="1">
    <source>
        <dbReference type="HAMAP-Rule" id="MF_00440"/>
    </source>
</evidence>
<keyword id="KW-0067">ATP-binding</keyword>
<keyword id="KW-0238">DNA-binding</keyword>
<keyword id="KW-0479">Metal-binding</keyword>
<keyword id="KW-0547">Nucleotide-binding</keyword>
<keyword id="KW-1185">Reference proteome</keyword>
<keyword id="KW-0678">Repressor</keyword>
<keyword id="KW-0804">Transcription</keyword>
<keyword id="KW-0805">Transcription regulation</keyword>
<keyword id="KW-0862">Zinc</keyword>
<keyword id="KW-0863">Zinc-finger</keyword>
<feature type="chain" id="PRO_0000264182" description="Transcriptional repressor NrdR">
    <location>
        <begin position="1"/>
        <end position="156"/>
    </location>
</feature>
<feature type="domain" description="ATP-cone" evidence="1">
    <location>
        <begin position="49"/>
        <end position="139"/>
    </location>
</feature>
<feature type="zinc finger region" evidence="1">
    <location>
        <begin position="3"/>
        <end position="34"/>
    </location>
</feature>
<comment type="function">
    <text evidence="1">Negatively regulates transcription of bacterial ribonucleotide reductase nrd genes and operons by binding to NrdR-boxes.</text>
</comment>
<comment type="cofactor">
    <cofactor evidence="1">
        <name>Zn(2+)</name>
        <dbReference type="ChEBI" id="CHEBI:29105"/>
    </cofactor>
    <text evidence="1">Binds 1 zinc ion.</text>
</comment>
<comment type="similarity">
    <text evidence="1">Belongs to the NrdR family.</text>
</comment>
<organism>
    <name type="scientific">Jannaschia sp. (strain CCS1)</name>
    <dbReference type="NCBI Taxonomy" id="290400"/>
    <lineage>
        <taxon>Bacteria</taxon>
        <taxon>Pseudomonadati</taxon>
        <taxon>Pseudomonadota</taxon>
        <taxon>Alphaproteobacteria</taxon>
        <taxon>Rhodobacterales</taxon>
        <taxon>Roseobacteraceae</taxon>
        <taxon>Jannaschia</taxon>
    </lineage>
</organism>
<dbReference type="EMBL" id="CP000264">
    <property type="protein sequence ID" value="ABD56339.1"/>
    <property type="molecule type" value="Genomic_DNA"/>
</dbReference>
<dbReference type="RefSeq" id="WP_011456541.1">
    <property type="nucleotide sequence ID" value="NC_007802.1"/>
</dbReference>
<dbReference type="SMR" id="Q28LS3"/>
<dbReference type="STRING" id="290400.Jann_3422"/>
<dbReference type="KEGG" id="jan:Jann_3422"/>
<dbReference type="eggNOG" id="COG1327">
    <property type="taxonomic scope" value="Bacteria"/>
</dbReference>
<dbReference type="HOGENOM" id="CLU_108412_0_1_5"/>
<dbReference type="OrthoDB" id="9807461at2"/>
<dbReference type="Proteomes" id="UP000008326">
    <property type="component" value="Chromosome"/>
</dbReference>
<dbReference type="GO" id="GO:0005524">
    <property type="term" value="F:ATP binding"/>
    <property type="evidence" value="ECO:0007669"/>
    <property type="project" value="UniProtKB-KW"/>
</dbReference>
<dbReference type="GO" id="GO:0003677">
    <property type="term" value="F:DNA binding"/>
    <property type="evidence" value="ECO:0007669"/>
    <property type="project" value="UniProtKB-KW"/>
</dbReference>
<dbReference type="GO" id="GO:0008270">
    <property type="term" value="F:zinc ion binding"/>
    <property type="evidence" value="ECO:0007669"/>
    <property type="project" value="UniProtKB-UniRule"/>
</dbReference>
<dbReference type="GO" id="GO:0045892">
    <property type="term" value="P:negative regulation of DNA-templated transcription"/>
    <property type="evidence" value="ECO:0007669"/>
    <property type="project" value="UniProtKB-UniRule"/>
</dbReference>
<dbReference type="HAMAP" id="MF_00440">
    <property type="entry name" value="NrdR"/>
    <property type="match status" value="1"/>
</dbReference>
<dbReference type="InterPro" id="IPR005144">
    <property type="entry name" value="ATP-cone_dom"/>
</dbReference>
<dbReference type="InterPro" id="IPR055173">
    <property type="entry name" value="NrdR-like_N"/>
</dbReference>
<dbReference type="InterPro" id="IPR003796">
    <property type="entry name" value="RNR_NrdR-like"/>
</dbReference>
<dbReference type="NCBIfam" id="TIGR00244">
    <property type="entry name" value="transcriptional regulator NrdR"/>
    <property type="match status" value="1"/>
</dbReference>
<dbReference type="PANTHER" id="PTHR30455">
    <property type="entry name" value="TRANSCRIPTIONAL REPRESSOR NRDR"/>
    <property type="match status" value="1"/>
</dbReference>
<dbReference type="PANTHER" id="PTHR30455:SF2">
    <property type="entry name" value="TRANSCRIPTIONAL REPRESSOR NRDR"/>
    <property type="match status" value="1"/>
</dbReference>
<dbReference type="Pfam" id="PF03477">
    <property type="entry name" value="ATP-cone"/>
    <property type="match status" value="1"/>
</dbReference>
<dbReference type="Pfam" id="PF22811">
    <property type="entry name" value="Zn_ribbon_NrdR"/>
    <property type="match status" value="1"/>
</dbReference>
<dbReference type="PROSITE" id="PS51161">
    <property type="entry name" value="ATP_CONE"/>
    <property type="match status" value="1"/>
</dbReference>
<name>NRDR_JANSC</name>
<gene>
    <name evidence="1" type="primary">nrdR</name>
    <name type="ordered locus">Jann_3422</name>
</gene>
<proteinExistence type="inferred from homology"/>
<protein>
    <recommendedName>
        <fullName evidence="1">Transcriptional repressor NrdR</fullName>
    </recommendedName>
</protein>
<sequence>MRCPFCGNVDTQVKDSRPAEDHVAIRRRRFCPACAGRFTTYERVQLRDLVVIKSNGKREDFDRTKLERSIRMALQKRPIEPERVDQMISGMVRRLESLGETDVQSKVIGEIVMERLAAIDTVAYVRFASVYKNFQATGDFEDFLSELRPPAPTTDT</sequence>
<accession>Q28LS3</accession>
<reference key="1">
    <citation type="submission" date="2006-02" db="EMBL/GenBank/DDBJ databases">
        <title>Complete sequence of chromosome of Jannaschia sp. CCS1.</title>
        <authorList>
            <consortium name="US DOE Joint Genome Institute"/>
            <person name="Copeland A."/>
            <person name="Lucas S."/>
            <person name="Lapidus A."/>
            <person name="Barry K."/>
            <person name="Detter J.C."/>
            <person name="Glavina del Rio T."/>
            <person name="Hammon N."/>
            <person name="Israni S."/>
            <person name="Pitluck S."/>
            <person name="Brettin T."/>
            <person name="Bruce D."/>
            <person name="Han C."/>
            <person name="Tapia R."/>
            <person name="Gilna P."/>
            <person name="Chertkov O."/>
            <person name="Saunders E."/>
            <person name="Schmutz J."/>
            <person name="Larimer F."/>
            <person name="Land M."/>
            <person name="Kyrpides N."/>
            <person name="Lykidis A."/>
            <person name="Moran M.A."/>
            <person name="Belas R."/>
            <person name="Ye W."/>
            <person name="Buchan A."/>
            <person name="Gonzalez J.M."/>
            <person name="Schell M.A."/>
            <person name="Richardson P."/>
        </authorList>
    </citation>
    <scope>NUCLEOTIDE SEQUENCE [LARGE SCALE GENOMIC DNA]</scope>
    <source>
        <strain>CCS1</strain>
    </source>
</reference>